<protein>
    <recommendedName>
        <fullName evidence="1">Small ribosomal subunit protein bS20</fullName>
    </recommendedName>
    <alternativeName>
        <fullName evidence="2">30S ribosomal protein S20</fullName>
    </alternativeName>
</protein>
<gene>
    <name evidence="1" type="primary">rpsT</name>
    <name type="ordered locus">NAMH_1394</name>
</gene>
<sequence>MANNKSALKRIRQTKKRTERNRYFRTRIKTITKKVESAVAEGNYEAALEAWKEANKKFQGYINKGILKKNTARRKISRLHHLVKSIEPSA</sequence>
<dbReference type="EMBL" id="CP001279">
    <property type="protein sequence ID" value="ACM92609.1"/>
    <property type="molecule type" value="Genomic_DNA"/>
</dbReference>
<dbReference type="RefSeq" id="WP_012663980.1">
    <property type="nucleotide sequence ID" value="NC_012115.1"/>
</dbReference>
<dbReference type="SMR" id="B9L5Z8"/>
<dbReference type="STRING" id="598659.NAMH_1394"/>
<dbReference type="KEGG" id="nam:NAMH_1394"/>
<dbReference type="eggNOG" id="COG0268">
    <property type="taxonomic scope" value="Bacteria"/>
</dbReference>
<dbReference type="HOGENOM" id="CLU_160655_3_0_7"/>
<dbReference type="OrthoDB" id="9807974at2"/>
<dbReference type="Proteomes" id="UP000000448">
    <property type="component" value="Chromosome"/>
</dbReference>
<dbReference type="GO" id="GO:0005829">
    <property type="term" value="C:cytosol"/>
    <property type="evidence" value="ECO:0007669"/>
    <property type="project" value="TreeGrafter"/>
</dbReference>
<dbReference type="GO" id="GO:0015935">
    <property type="term" value="C:small ribosomal subunit"/>
    <property type="evidence" value="ECO:0007669"/>
    <property type="project" value="TreeGrafter"/>
</dbReference>
<dbReference type="GO" id="GO:0070181">
    <property type="term" value="F:small ribosomal subunit rRNA binding"/>
    <property type="evidence" value="ECO:0007669"/>
    <property type="project" value="TreeGrafter"/>
</dbReference>
<dbReference type="GO" id="GO:0003735">
    <property type="term" value="F:structural constituent of ribosome"/>
    <property type="evidence" value="ECO:0007669"/>
    <property type="project" value="InterPro"/>
</dbReference>
<dbReference type="GO" id="GO:0006412">
    <property type="term" value="P:translation"/>
    <property type="evidence" value="ECO:0007669"/>
    <property type="project" value="UniProtKB-UniRule"/>
</dbReference>
<dbReference type="FunFam" id="1.20.58.110:FF:000001">
    <property type="entry name" value="30S ribosomal protein S20"/>
    <property type="match status" value="1"/>
</dbReference>
<dbReference type="Gene3D" id="1.20.58.110">
    <property type="entry name" value="Ribosomal protein S20"/>
    <property type="match status" value="1"/>
</dbReference>
<dbReference type="HAMAP" id="MF_00500">
    <property type="entry name" value="Ribosomal_bS20"/>
    <property type="match status" value="1"/>
</dbReference>
<dbReference type="InterPro" id="IPR002583">
    <property type="entry name" value="Ribosomal_bS20"/>
</dbReference>
<dbReference type="InterPro" id="IPR036510">
    <property type="entry name" value="Ribosomal_bS20_sf"/>
</dbReference>
<dbReference type="NCBIfam" id="TIGR00029">
    <property type="entry name" value="S20"/>
    <property type="match status" value="1"/>
</dbReference>
<dbReference type="PANTHER" id="PTHR33398">
    <property type="entry name" value="30S RIBOSOMAL PROTEIN S20"/>
    <property type="match status" value="1"/>
</dbReference>
<dbReference type="PANTHER" id="PTHR33398:SF1">
    <property type="entry name" value="SMALL RIBOSOMAL SUBUNIT PROTEIN BS20C"/>
    <property type="match status" value="1"/>
</dbReference>
<dbReference type="Pfam" id="PF01649">
    <property type="entry name" value="Ribosomal_S20p"/>
    <property type="match status" value="1"/>
</dbReference>
<dbReference type="SUPFAM" id="SSF46992">
    <property type="entry name" value="Ribosomal protein S20"/>
    <property type="match status" value="1"/>
</dbReference>
<evidence type="ECO:0000255" key="1">
    <source>
        <dbReference type="HAMAP-Rule" id="MF_00500"/>
    </source>
</evidence>
<evidence type="ECO:0000305" key="2"/>
<reference key="1">
    <citation type="journal article" date="2009" name="PLoS Genet.">
        <title>Adaptations to submarine hydrothermal environments exemplified by the genome of Nautilia profundicola.</title>
        <authorList>
            <person name="Campbell B.J."/>
            <person name="Smith J.L."/>
            <person name="Hanson T.E."/>
            <person name="Klotz M.G."/>
            <person name="Stein L.Y."/>
            <person name="Lee C.K."/>
            <person name="Wu D."/>
            <person name="Robinson J.M."/>
            <person name="Khouri H.M."/>
            <person name="Eisen J.A."/>
            <person name="Cary S.C."/>
        </authorList>
    </citation>
    <scope>NUCLEOTIDE SEQUENCE [LARGE SCALE GENOMIC DNA]</scope>
    <source>
        <strain>ATCC BAA-1463 / DSM 18972 / AmH</strain>
    </source>
</reference>
<name>RS20_NAUPA</name>
<comment type="function">
    <text evidence="1">Binds directly to 16S ribosomal RNA.</text>
</comment>
<comment type="similarity">
    <text evidence="1">Belongs to the bacterial ribosomal protein bS20 family.</text>
</comment>
<organism>
    <name type="scientific">Nautilia profundicola (strain ATCC BAA-1463 / DSM 18972 / AmH)</name>
    <dbReference type="NCBI Taxonomy" id="598659"/>
    <lineage>
        <taxon>Bacteria</taxon>
        <taxon>Pseudomonadati</taxon>
        <taxon>Campylobacterota</taxon>
        <taxon>Epsilonproteobacteria</taxon>
        <taxon>Nautiliales</taxon>
        <taxon>Nautiliaceae</taxon>
        <taxon>Nautilia</taxon>
    </lineage>
</organism>
<keyword id="KW-0687">Ribonucleoprotein</keyword>
<keyword id="KW-0689">Ribosomal protein</keyword>
<keyword id="KW-0694">RNA-binding</keyword>
<keyword id="KW-0699">rRNA-binding</keyword>
<proteinExistence type="inferred from homology"/>
<feature type="chain" id="PRO_1000194256" description="Small ribosomal subunit protein bS20">
    <location>
        <begin position="1"/>
        <end position="90"/>
    </location>
</feature>
<accession>B9L5Z8</accession>